<dbReference type="EMBL" id="CH476594">
    <property type="protein sequence ID" value="EAU39141.1"/>
    <property type="molecule type" value="Genomic_DNA"/>
</dbReference>
<dbReference type="RefSeq" id="XP_001210581.1">
    <property type="nucleotide sequence ID" value="XM_001210581.1"/>
</dbReference>
<dbReference type="STRING" id="341663.Q0D0N9"/>
<dbReference type="EnsemblFungi" id="EAU39141">
    <property type="protein sequence ID" value="EAU39141"/>
    <property type="gene ID" value="ATEG_00495"/>
</dbReference>
<dbReference type="GeneID" id="4355249"/>
<dbReference type="VEuPathDB" id="FungiDB:ATEG_00495"/>
<dbReference type="eggNOG" id="KOG0998">
    <property type="taxonomic scope" value="Eukaryota"/>
</dbReference>
<dbReference type="HOGENOM" id="CLU_040829_0_0_1"/>
<dbReference type="OMA" id="DWLIPES"/>
<dbReference type="OrthoDB" id="1716625at2759"/>
<dbReference type="Proteomes" id="UP000007963">
    <property type="component" value="Unassembled WGS sequence"/>
</dbReference>
<dbReference type="GO" id="GO:0030479">
    <property type="term" value="C:actin cortical patch"/>
    <property type="evidence" value="ECO:0007669"/>
    <property type="project" value="UniProtKB-SubCell"/>
</dbReference>
<dbReference type="GO" id="GO:0010008">
    <property type="term" value="C:endosome membrane"/>
    <property type="evidence" value="ECO:0007669"/>
    <property type="project" value="UniProtKB-SubCell"/>
</dbReference>
<dbReference type="GO" id="GO:0005886">
    <property type="term" value="C:plasma membrane"/>
    <property type="evidence" value="ECO:0007669"/>
    <property type="project" value="UniProtKB-SubCell"/>
</dbReference>
<dbReference type="GO" id="GO:0003779">
    <property type="term" value="F:actin binding"/>
    <property type="evidence" value="ECO:0007669"/>
    <property type="project" value="UniProtKB-KW"/>
</dbReference>
<dbReference type="GO" id="GO:0005509">
    <property type="term" value="F:calcium ion binding"/>
    <property type="evidence" value="ECO:0007669"/>
    <property type="project" value="InterPro"/>
</dbReference>
<dbReference type="GO" id="GO:0007015">
    <property type="term" value="P:actin filament organization"/>
    <property type="evidence" value="ECO:0007669"/>
    <property type="project" value="InterPro"/>
</dbReference>
<dbReference type="GO" id="GO:0006897">
    <property type="term" value="P:endocytosis"/>
    <property type="evidence" value="ECO:0007669"/>
    <property type="project" value="UniProtKB-KW"/>
</dbReference>
<dbReference type="GO" id="GO:0016197">
    <property type="term" value="P:endosomal transport"/>
    <property type="evidence" value="ECO:0007669"/>
    <property type="project" value="TreeGrafter"/>
</dbReference>
<dbReference type="CDD" id="cd00052">
    <property type="entry name" value="EH"/>
    <property type="match status" value="1"/>
</dbReference>
<dbReference type="FunFam" id="1.10.238.10:FF:000339">
    <property type="entry name" value="Actin cytoskeleton-regulatory complex protein END3"/>
    <property type="match status" value="1"/>
</dbReference>
<dbReference type="FunFam" id="1.10.238.10:FF:000323">
    <property type="entry name" value="Actin cytoskeleton-regulatory complex protein end3"/>
    <property type="match status" value="1"/>
</dbReference>
<dbReference type="Gene3D" id="1.10.238.10">
    <property type="entry name" value="EF-hand"/>
    <property type="match status" value="2"/>
</dbReference>
<dbReference type="InterPro" id="IPR011992">
    <property type="entry name" value="EF-hand-dom_pair"/>
</dbReference>
<dbReference type="InterPro" id="IPR018247">
    <property type="entry name" value="EF_Hand_1_Ca_BS"/>
</dbReference>
<dbReference type="InterPro" id="IPR002048">
    <property type="entry name" value="EF_hand_dom"/>
</dbReference>
<dbReference type="InterPro" id="IPR000261">
    <property type="entry name" value="EH_dom"/>
</dbReference>
<dbReference type="InterPro" id="IPR025604">
    <property type="entry name" value="End3"/>
</dbReference>
<dbReference type="PANTHER" id="PTHR11216">
    <property type="entry name" value="EH DOMAIN"/>
    <property type="match status" value="1"/>
</dbReference>
<dbReference type="Pfam" id="PF12763">
    <property type="entry name" value="EH"/>
    <property type="match status" value="1"/>
</dbReference>
<dbReference type="Pfam" id="PF12761">
    <property type="entry name" value="End3"/>
    <property type="match status" value="1"/>
</dbReference>
<dbReference type="SMART" id="SM00054">
    <property type="entry name" value="EFh"/>
    <property type="match status" value="1"/>
</dbReference>
<dbReference type="SMART" id="SM00027">
    <property type="entry name" value="EH"/>
    <property type="match status" value="2"/>
</dbReference>
<dbReference type="SUPFAM" id="SSF47473">
    <property type="entry name" value="EF-hand"/>
    <property type="match status" value="2"/>
</dbReference>
<dbReference type="PROSITE" id="PS00018">
    <property type="entry name" value="EF_HAND_1"/>
    <property type="match status" value="1"/>
</dbReference>
<dbReference type="PROSITE" id="PS50222">
    <property type="entry name" value="EF_HAND_2"/>
    <property type="match status" value="1"/>
</dbReference>
<dbReference type="PROSITE" id="PS50031">
    <property type="entry name" value="EH"/>
    <property type="match status" value="2"/>
</dbReference>
<gene>
    <name type="primary">end3</name>
    <name type="synonym">sagA</name>
    <name type="ORF">ATEG_00495</name>
</gene>
<accession>Q0D0N9</accession>
<protein>
    <recommendedName>
        <fullName>Actin cytoskeleton-regulatory complex protein end3</fullName>
    </recommendedName>
    <alternativeName>
        <fullName>Cytoskeletal adapter protein sagA</fullName>
    </alternativeName>
    <alternativeName>
        <fullName>Endocytosis protein 3</fullName>
    </alternativeName>
</protein>
<organism>
    <name type="scientific">Aspergillus terreus (strain NIH 2624 / FGSC A1156)</name>
    <dbReference type="NCBI Taxonomy" id="341663"/>
    <lineage>
        <taxon>Eukaryota</taxon>
        <taxon>Fungi</taxon>
        <taxon>Dikarya</taxon>
        <taxon>Ascomycota</taxon>
        <taxon>Pezizomycotina</taxon>
        <taxon>Eurotiomycetes</taxon>
        <taxon>Eurotiomycetidae</taxon>
        <taxon>Eurotiales</taxon>
        <taxon>Aspergillaceae</taxon>
        <taxon>Aspergillus</taxon>
        <taxon>Aspergillus subgen. Circumdati</taxon>
    </lineage>
</organism>
<comment type="function">
    <text evidence="1">Component of the PAN1 actin cytoskeleton-regulatory complex required for the internalization of endosomes during actin-coupled endocytosis. The complex links the site of endocytosis to the cell membrane-associated actin cytoskeleton. Mediates uptake of external molecules and vacuolar degradation of plasma membrane proteins. Plays a role in the proper organization of the cell membrane-associated actin cytoskeleton and promotes its destabilization (By similarity).</text>
</comment>
<comment type="subunit">
    <text evidence="1">Component of the PAN1 actin cytoskeleton-regulatory complex.</text>
</comment>
<comment type="subcellular location">
    <subcellularLocation>
        <location evidence="1">Cell membrane</location>
        <topology evidence="1">Peripheral membrane protein</topology>
        <orientation evidence="1">Cytoplasmic side</orientation>
    </subcellularLocation>
    <subcellularLocation>
        <location evidence="1">Endosome membrane</location>
        <topology evidence="1">Peripheral membrane protein</topology>
        <orientation evidence="1">Cytoplasmic side</orientation>
    </subcellularLocation>
    <subcellularLocation>
        <location evidence="1">Cytoplasm</location>
        <location evidence="1">Cytoskeleton</location>
        <location evidence="1">Actin patch</location>
    </subcellularLocation>
    <text evidence="1">Cytoplasmic and cortical actin patches.</text>
</comment>
<comment type="similarity">
    <text evidence="6">Belongs to the END3 family.</text>
</comment>
<keyword id="KW-0009">Actin-binding</keyword>
<keyword id="KW-0106">Calcium</keyword>
<keyword id="KW-1003">Cell membrane</keyword>
<keyword id="KW-0175">Coiled coil</keyword>
<keyword id="KW-0963">Cytoplasm</keyword>
<keyword id="KW-0206">Cytoskeleton</keyword>
<keyword id="KW-0254">Endocytosis</keyword>
<keyword id="KW-0967">Endosome</keyword>
<keyword id="KW-0472">Membrane</keyword>
<keyword id="KW-0479">Metal-binding</keyword>
<keyword id="KW-1185">Reference proteome</keyword>
<keyword id="KW-0677">Repeat</keyword>
<evidence type="ECO:0000250" key="1"/>
<evidence type="ECO:0000255" key="2"/>
<evidence type="ECO:0000255" key="3">
    <source>
        <dbReference type="PROSITE-ProRule" id="PRU00077"/>
    </source>
</evidence>
<evidence type="ECO:0000255" key="4">
    <source>
        <dbReference type="PROSITE-ProRule" id="PRU00448"/>
    </source>
</evidence>
<evidence type="ECO:0000256" key="5">
    <source>
        <dbReference type="SAM" id="MobiDB-lite"/>
    </source>
</evidence>
<evidence type="ECO:0000305" key="6"/>
<reference key="1">
    <citation type="submission" date="2005-09" db="EMBL/GenBank/DDBJ databases">
        <title>Annotation of the Aspergillus terreus NIH2624 genome.</title>
        <authorList>
            <person name="Birren B.W."/>
            <person name="Lander E.S."/>
            <person name="Galagan J.E."/>
            <person name="Nusbaum C."/>
            <person name="Devon K."/>
            <person name="Henn M."/>
            <person name="Ma L.-J."/>
            <person name="Jaffe D.B."/>
            <person name="Butler J."/>
            <person name="Alvarez P."/>
            <person name="Gnerre S."/>
            <person name="Grabherr M."/>
            <person name="Kleber M."/>
            <person name="Mauceli E.W."/>
            <person name="Brockman W."/>
            <person name="Rounsley S."/>
            <person name="Young S.K."/>
            <person name="LaButti K."/>
            <person name="Pushparaj V."/>
            <person name="DeCaprio D."/>
            <person name="Crawford M."/>
            <person name="Koehrsen M."/>
            <person name="Engels R."/>
            <person name="Montgomery P."/>
            <person name="Pearson M."/>
            <person name="Howarth C."/>
            <person name="Larson L."/>
            <person name="Luoma S."/>
            <person name="White J."/>
            <person name="Alvarado L."/>
            <person name="Kodira C.D."/>
            <person name="Zeng Q."/>
            <person name="Oleary S."/>
            <person name="Yandava C."/>
            <person name="Denning D.W."/>
            <person name="Nierman W.C."/>
            <person name="Milne T."/>
            <person name="Madden K."/>
        </authorList>
    </citation>
    <scope>NUCLEOTIDE SEQUENCE [LARGE SCALE GENOMIC DNA]</scope>
    <source>
        <strain>NIH 2624 / FGSC A1156</strain>
    </source>
</reference>
<name>END3_ASPTN</name>
<feature type="chain" id="PRO_0000349441" description="Actin cytoskeleton-regulatory complex protein end3">
    <location>
        <begin position="1"/>
        <end position="404"/>
    </location>
</feature>
<feature type="domain" description="EH 1" evidence="3">
    <location>
        <begin position="10"/>
        <end position="100"/>
    </location>
</feature>
<feature type="domain" description="EF-hand" evidence="4">
    <location>
        <begin position="42"/>
        <end position="77"/>
    </location>
</feature>
<feature type="domain" description="EH 2" evidence="3">
    <location>
        <begin position="139"/>
        <end position="227"/>
    </location>
</feature>
<feature type="region of interest" description="Disordered" evidence="5">
    <location>
        <begin position="237"/>
        <end position="256"/>
    </location>
</feature>
<feature type="region of interest" description="Disordered" evidence="5">
    <location>
        <begin position="307"/>
        <end position="326"/>
    </location>
</feature>
<feature type="coiled-coil region" evidence="2">
    <location>
        <begin position="279"/>
        <end position="381"/>
    </location>
</feature>
<feature type="compositionally biased region" description="Basic and acidic residues" evidence="5">
    <location>
        <begin position="307"/>
        <end position="324"/>
    </location>
</feature>
<feature type="binding site" evidence="4">
    <location>
        <position position="55"/>
    </location>
    <ligand>
        <name>Ca(2+)</name>
        <dbReference type="ChEBI" id="CHEBI:29108"/>
    </ligand>
</feature>
<feature type="binding site" evidence="4">
    <location>
        <position position="57"/>
    </location>
    <ligand>
        <name>Ca(2+)</name>
        <dbReference type="ChEBI" id="CHEBI:29108"/>
    </ligand>
</feature>
<feature type="binding site" evidence="4">
    <location>
        <position position="59"/>
    </location>
    <ligand>
        <name>Ca(2+)</name>
        <dbReference type="ChEBI" id="CHEBI:29108"/>
    </ligand>
</feature>
<feature type="binding site" evidence="4">
    <location>
        <position position="61"/>
    </location>
    <ligand>
        <name>Ca(2+)</name>
        <dbReference type="ChEBI" id="CHEBI:29108"/>
    </ligand>
</feature>
<feature type="binding site" evidence="4">
    <location>
        <position position="66"/>
    </location>
    <ligand>
        <name>Ca(2+)</name>
        <dbReference type="ChEBI" id="CHEBI:29108"/>
    </ligand>
</feature>
<sequence>MSNKKIEQWEIERYWEIFASLSNGQPRLNNSQAASVLRNSRLRDEQLEKVWDLADVDGDGELDFEEFCVAMRLVFDLVNGELQSVPQHLPDWLVPESKAHLVQATRVLSTGSEQFERIEDEDDTPGLKDGFDWYMNPSDKAKYEEIYSANKNQRGEISFGSLQPLYDSLDVPDTDIRSAWNLVNPSASPEINKDATLAFLHILNYRHEGYRIPRTIPASLRASFENNKIDYQVDNARPAQRWGPNGDTETPTGRKAKFGDTYLSRLGVGGKASYTPKGTDFNNTIQDEEWEKVRLRRELAELEAKLDSAKKASEGRRDQPRNDGRPSWVLVKKEALQLLDYKERELRELREGTGRSKDGQDLERIREDIRTVGEQVDGLKSHLARRNEYLHDLRRQVEEEKLSR</sequence>
<proteinExistence type="inferred from homology"/>